<name>NUOK_THEYD</name>
<organism>
    <name type="scientific">Thermodesulfovibrio yellowstonii (strain ATCC 51303 / DSM 11347 / YP87)</name>
    <dbReference type="NCBI Taxonomy" id="289376"/>
    <lineage>
        <taxon>Bacteria</taxon>
        <taxon>Pseudomonadati</taxon>
        <taxon>Nitrospirota</taxon>
        <taxon>Thermodesulfovibrionia</taxon>
        <taxon>Thermodesulfovibrionales</taxon>
        <taxon>Thermodesulfovibrionaceae</taxon>
        <taxon>Thermodesulfovibrio</taxon>
    </lineage>
</organism>
<reference key="1">
    <citation type="submission" date="2008-08" db="EMBL/GenBank/DDBJ databases">
        <title>The complete genome sequence of Thermodesulfovibrio yellowstonii strain ATCC 51303 / DSM 11347 / YP87.</title>
        <authorList>
            <person name="Dodson R.J."/>
            <person name="Durkin A.S."/>
            <person name="Wu M."/>
            <person name="Eisen J."/>
            <person name="Sutton G."/>
        </authorList>
    </citation>
    <scope>NUCLEOTIDE SEQUENCE [LARGE SCALE GENOMIC DNA]</scope>
    <source>
        <strain>ATCC 51303 / DSM 11347 / YP87</strain>
    </source>
</reference>
<dbReference type="EC" id="7.1.1.-" evidence="1"/>
<dbReference type="EMBL" id="CP001147">
    <property type="protein sequence ID" value="ACI22118.1"/>
    <property type="molecule type" value="Genomic_DNA"/>
</dbReference>
<dbReference type="RefSeq" id="WP_012546809.1">
    <property type="nucleotide sequence ID" value="NC_011296.1"/>
</dbReference>
<dbReference type="RefSeq" id="YP_002248754.1">
    <property type="nucleotide sequence ID" value="NC_011296.1"/>
</dbReference>
<dbReference type="SMR" id="B5YKI9"/>
<dbReference type="FunCoup" id="B5YKI9">
    <property type="interactions" value="216"/>
</dbReference>
<dbReference type="STRING" id="289376.THEYE_A0918"/>
<dbReference type="EnsemblBacteria" id="ACI22118">
    <property type="protein sequence ID" value="ACI22118"/>
    <property type="gene ID" value="THEYE_A0918"/>
</dbReference>
<dbReference type="KEGG" id="tye:THEYE_A0918"/>
<dbReference type="PATRIC" id="fig|289376.4.peg.904"/>
<dbReference type="eggNOG" id="COG0713">
    <property type="taxonomic scope" value="Bacteria"/>
</dbReference>
<dbReference type="HOGENOM" id="CLU_144724_0_0_0"/>
<dbReference type="InParanoid" id="B5YKI9"/>
<dbReference type="OrthoDB" id="9810120at2"/>
<dbReference type="Proteomes" id="UP000000718">
    <property type="component" value="Chromosome"/>
</dbReference>
<dbReference type="GO" id="GO:0030964">
    <property type="term" value="C:NADH dehydrogenase complex"/>
    <property type="evidence" value="ECO:0000318"/>
    <property type="project" value="GO_Central"/>
</dbReference>
<dbReference type="GO" id="GO:0005886">
    <property type="term" value="C:plasma membrane"/>
    <property type="evidence" value="ECO:0007669"/>
    <property type="project" value="UniProtKB-SubCell"/>
</dbReference>
<dbReference type="GO" id="GO:0050136">
    <property type="term" value="F:NADH:ubiquinone reductase (non-electrogenic) activity"/>
    <property type="evidence" value="ECO:0007669"/>
    <property type="project" value="UniProtKB-UniRule"/>
</dbReference>
<dbReference type="GO" id="GO:0048038">
    <property type="term" value="F:quinone binding"/>
    <property type="evidence" value="ECO:0007669"/>
    <property type="project" value="UniProtKB-KW"/>
</dbReference>
<dbReference type="GO" id="GO:0042773">
    <property type="term" value="P:ATP synthesis coupled electron transport"/>
    <property type="evidence" value="ECO:0007669"/>
    <property type="project" value="InterPro"/>
</dbReference>
<dbReference type="FunFam" id="1.10.287.3510:FF:000001">
    <property type="entry name" value="NADH-quinone oxidoreductase subunit K"/>
    <property type="match status" value="1"/>
</dbReference>
<dbReference type="Gene3D" id="1.10.287.3510">
    <property type="match status" value="1"/>
</dbReference>
<dbReference type="HAMAP" id="MF_01456">
    <property type="entry name" value="NDH1_NuoK"/>
    <property type="match status" value="1"/>
</dbReference>
<dbReference type="InterPro" id="IPR001133">
    <property type="entry name" value="NADH_UbQ_OxRdtase_chain4L/K"/>
</dbReference>
<dbReference type="InterPro" id="IPR039428">
    <property type="entry name" value="NUOK/Mnh_C1-like"/>
</dbReference>
<dbReference type="NCBIfam" id="NF004320">
    <property type="entry name" value="PRK05715.1-2"/>
    <property type="match status" value="1"/>
</dbReference>
<dbReference type="PANTHER" id="PTHR11434:SF16">
    <property type="entry name" value="NADH-UBIQUINONE OXIDOREDUCTASE CHAIN 4L"/>
    <property type="match status" value="1"/>
</dbReference>
<dbReference type="PANTHER" id="PTHR11434">
    <property type="entry name" value="NADH-UBIQUINONE OXIDOREDUCTASE SUBUNIT ND4L"/>
    <property type="match status" value="1"/>
</dbReference>
<dbReference type="Pfam" id="PF00420">
    <property type="entry name" value="Oxidored_q2"/>
    <property type="match status" value="1"/>
</dbReference>
<gene>
    <name evidence="1" type="primary">nuoK</name>
    <name type="ordered locus">THEYE_A0918</name>
</gene>
<sequence length="100" mass="10972">MIPLSWYLLLSATLFSIGLIGFVIRRDLIVMLMCLEIMFNAVNIAFASFSYYNSNLTGQIFVLFSIAVAACEAVIGLAIVLALVRNTGINHSDEIVNLRG</sequence>
<comment type="function">
    <text evidence="1">NDH-1 shuttles electrons from NADH, via FMN and iron-sulfur (Fe-S) centers, to quinones in the respiratory chain. The immediate electron acceptor for the enzyme in this species is believed to be ubiquinone. Couples the redox reaction to proton translocation (for every two electrons transferred, four hydrogen ions are translocated across the cytoplasmic membrane), and thus conserves the redox energy in a proton gradient.</text>
</comment>
<comment type="catalytic activity">
    <reaction evidence="1">
        <text>a quinone + NADH + 5 H(+)(in) = a quinol + NAD(+) + 4 H(+)(out)</text>
        <dbReference type="Rhea" id="RHEA:57888"/>
        <dbReference type="ChEBI" id="CHEBI:15378"/>
        <dbReference type="ChEBI" id="CHEBI:24646"/>
        <dbReference type="ChEBI" id="CHEBI:57540"/>
        <dbReference type="ChEBI" id="CHEBI:57945"/>
        <dbReference type="ChEBI" id="CHEBI:132124"/>
    </reaction>
</comment>
<comment type="subunit">
    <text evidence="1">NDH-1 is composed of 14 different subunits. Subunits NuoA, H, J, K, L, M, N constitute the membrane sector of the complex.</text>
</comment>
<comment type="subcellular location">
    <subcellularLocation>
        <location evidence="1">Cell inner membrane</location>
        <topology evidence="1">Multi-pass membrane protein</topology>
    </subcellularLocation>
</comment>
<comment type="similarity">
    <text evidence="1">Belongs to the complex I subunit 4L family.</text>
</comment>
<protein>
    <recommendedName>
        <fullName evidence="1">NADH-quinone oxidoreductase subunit K</fullName>
        <ecNumber evidence="1">7.1.1.-</ecNumber>
    </recommendedName>
    <alternativeName>
        <fullName evidence="1">NADH dehydrogenase I subunit K</fullName>
    </alternativeName>
    <alternativeName>
        <fullName evidence="1">NDH-1 subunit K</fullName>
    </alternativeName>
</protein>
<evidence type="ECO:0000255" key="1">
    <source>
        <dbReference type="HAMAP-Rule" id="MF_01456"/>
    </source>
</evidence>
<feature type="chain" id="PRO_0000390263" description="NADH-quinone oxidoreductase subunit K">
    <location>
        <begin position="1"/>
        <end position="100"/>
    </location>
</feature>
<feature type="transmembrane region" description="Helical" evidence="1">
    <location>
        <begin position="4"/>
        <end position="24"/>
    </location>
</feature>
<feature type="transmembrane region" description="Helical" evidence="1">
    <location>
        <begin position="29"/>
        <end position="49"/>
    </location>
</feature>
<feature type="transmembrane region" description="Helical" evidence="1">
    <location>
        <begin position="60"/>
        <end position="80"/>
    </location>
</feature>
<keyword id="KW-0997">Cell inner membrane</keyword>
<keyword id="KW-1003">Cell membrane</keyword>
<keyword id="KW-0472">Membrane</keyword>
<keyword id="KW-0520">NAD</keyword>
<keyword id="KW-0874">Quinone</keyword>
<keyword id="KW-1185">Reference proteome</keyword>
<keyword id="KW-1278">Translocase</keyword>
<keyword id="KW-0812">Transmembrane</keyword>
<keyword id="KW-1133">Transmembrane helix</keyword>
<keyword id="KW-0813">Transport</keyword>
<keyword id="KW-0830">Ubiquinone</keyword>
<accession>B5YKI9</accession>
<proteinExistence type="inferred from homology"/>